<dbReference type="EMBL" id="AL123456">
    <property type="protein sequence ID" value="CCP43710.1"/>
    <property type="molecule type" value="Genomic_DNA"/>
</dbReference>
<dbReference type="PIR" id="G70717">
    <property type="entry name" value="G70717"/>
</dbReference>
<dbReference type="RefSeq" id="NP_215476.1">
    <property type="nucleotide sequence ID" value="NC_000962.3"/>
</dbReference>
<dbReference type="RefSeq" id="WP_003404907.1">
    <property type="nucleotide sequence ID" value="NZ_NVQJ01000001.1"/>
</dbReference>
<dbReference type="STRING" id="83332.Rv0961"/>
<dbReference type="PaxDb" id="83332-Rv0961"/>
<dbReference type="DNASU" id="885173"/>
<dbReference type="GeneID" id="885173"/>
<dbReference type="KEGG" id="mtu:Rv0961"/>
<dbReference type="KEGG" id="mtv:RVBD_0961"/>
<dbReference type="PATRIC" id="fig|83332.111.peg.1067"/>
<dbReference type="TubercuList" id="Rv0961"/>
<dbReference type="eggNOG" id="ENOG50321ZE">
    <property type="taxonomic scope" value="Bacteria"/>
</dbReference>
<dbReference type="InParanoid" id="P9WKM9"/>
<dbReference type="OrthoDB" id="4741153at2"/>
<dbReference type="Proteomes" id="UP000001584">
    <property type="component" value="Chromosome"/>
</dbReference>
<dbReference type="GO" id="GO:0005886">
    <property type="term" value="C:plasma membrane"/>
    <property type="evidence" value="ECO:0007669"/>
    <property type="project" value="UniProtKB-SubCell"/>
</dbReference>
<sequence>MRVPSQWMISSRVTVAWNIVGYLVYAALAFVGGFAVWFSLFFAMATDGCHDSACDASYHVFPAMVTMWIGVGAVLLLTLVVMVRNSSRGNVVIGWPFVGLLALGLVYVAADAVLH</sequence>
<name>Y961_MYCTU</name>
<proteinExistence type="predicted"/>
<reference key="1">
    <citation type="journal article" date="1998" name="Nature">
        <title>Deciphering the biology of Mycobacterium tuberculosis from the complete genome sequence.</title>
        <authorList>
            <person name="Cole S.T."/>
            <person name="Brosch R."/>
            <person name="Parkhill J."/>
            <person name="Garnier T."/>
            <person name="Churcher C.M."/>
            <person name="Harris D.E."/>
            <person name="Gordon S.V."/>
            <person name="Eiglmeier K."/>
            <person name="Gas S."/>
            <person name="Barry C.E. III"/>
            <person name="Tekaia F."/>
            <person name="Badcock K."/>
            <person name="Basham D."/>
            <person name="Brown D."/>
            <person name="Chillingworth T."/>
            <person name="Connor R."/>
            <person name="Davies R.M."/>
            <person name="Devlin K."/>
            <person name="Feltwell T."/>
            <person name="Gentles S."/>
            <person name="Hamlin N."/>
            <person name="Holroyd S."/>
            <person name="Hornsby T."/>
            <person name="Jagels K."/>
            <person name="Krogh A."/>
            <person name="McLean J."/>
            <person name="Moule S."/>
            <person name="Murphy L.D."/>
            <person name="Oliver S."/>
            <person name="Osborne J."/>
            <person name="Quail M.A."/>
            <person name="Rajandream M.A."/>
            <person name="Rogers J."/>
            <person name="Rutter S."/>
            <person name="Seeger K."/>
            <person name="Skelton S."/>
            <person name="Squares S."/>
            <person name="Squares R."/>
            <person name="Sulston J.E."/>
            <person name="Taylor K."/>
            <person name="Whitehead S."/>
            <person name="Barrell B.G."/>
        </authorList>
    </citation>
    <scope>NUCLEOTIDE SEQUENCE [LARGE SCALE GENOMIC DNA]</scope>
    <source>
        <strain>ATCC 25618 / H37Rv</strain>
    </source>
</reference>
<feature type="chain" id="PRO_0000103757" description="Uncharacterized protein Rv0961">
    <location>
        <begin position="1"/>
        <end position="115"/>
    </location>
</feature>
<feature type="transmembrane region" description="Helical" evidence="1">
    <location>
        <begin position="23"/>
        <end position="43"/>
    </location>
</feature>
<feature type="transmembrane region" description="Helical" evidence="1">
    <location>
        <begin position="63"/>
        <end position="83"/>
    </location>
</feature>
<feature type="transmembrane region" description="Helical" evidence="1">
    <location>
        <begin position="90"/>
        <end position="110"/>
    </location>
</feature>
<gene>
    <name type="ordered locus">Rv0961</name>
    <name type="ORF">MTCY10D7.13c</name>
</gene>
<keyword id="KW-1003">Cell membrane</keyword>
<keyword id="KW-0472">Membrane</keyword>
<keyword id="KW-1185">Reference proteome</keyword>
<keyword id="KW-0812">Transmembrane</keyword>
<keyword id="KW-1133">Transmembrane helix</keyword>
<evidence type="ECO:0000255" key="1"/>
<evidence type="ECO:0000305" key="2"/>
<accession>P9WKM9</accession>
<accession>L0T5A9</accession>
<accession>P64775</accession>
<accession>P71549</accession>
<comment type="subcellular location">
    <subcellularLocation>
        <location evidence="2">Cell membrane</location>
        <topology evidence="2">Multi-pass membrane protein</topology>
    </subcellularLocation>
</comment>
<organism>
    <name type="scientific">Mycobacterium tuberculosis (strain ATCC 25618 / H37Rv)</name>
    <dbReference type="NCBI Taxonomy" id="83332"/>
    <lineage>
        <taxon>Bacteria</taxon>
        <taxon>Bacillati</taxon>
        <taxon>Actinomycetota</taxon>
        <taxon>Actinomycetes</taxon>
        <taxon>Mycobacteriales</taxon>
        <taxon>Mycobacteriaceae</taxon>
        <taxon>Mycobacterium</taxon>
        <taxon>Mycobacterium tuberculosis complex</taxon>
    </lineage>
</organism>
<protein>
    <recommendedName>
        <fullName>Uncharacterized protein Rv0961</fullName>
    </recommendedName>
</protein>